<accession>C1CFH9</accession>
<feature type="chain" id="PRO_1000194573" description="tRNA pseudouridine synthase A">
    <location>
        <begin position="1"/>
        <end position="249"/>
    </location>
</feature>
<feature type="active site" description="Nucleophile" evidence="1">
    <location>
        <position position="53"/>
    </location>
</feature>
<feature type="binding site" evidence="1">
    <location>
        <position position="111"/>
    </location>
    <ligand>
        <name>substrate</name>
    </ligand>
</feature>
<gene>
    <name evidence="1" type="primary">truA</name>
    <name type="ordered locus">SPJ_1503</name>
</gene>
<dbReference type="EC" id="5.4.99.12" evidence="1"/>
<dbReference type="EMBL" id="CP000919">
    <property type="protein sequence ID" value="ACO19285.1"/>
    <property type="molecule type" value="Genomic_DNA"/>
</dbReference>
<dbReference type="RefSeq" id="WP_000199207.1">
    <property type="nucleotide sequence ID" value="NC_012466.1"/>
</dbReference>
<dbReference type="SMR" id="C1CFH9"/>
<dbReference type="KEGG" id="sjj:SPJ_1503"/>
<dbReference type="HOGENOM" id="CLU_014673_0_1_9"/>
<dbReference type="Proteomes" id="UP000002206">
    <property type="component" value="Chromosome"/>
</dbReference>
<dbReference type="GO" id="GO:0003723">
    <property type="term" value="F:RNA binding"/>
    <property type="evidence" value="ECO:0007669"/>
    <property type="project" value="InterPro"/>
</dbReference>
<dbReference type="GO" id="GO:0160147">
    <property type="term" value="F:tRNA pseudouridine(38-40) synthase activity"/>
    <property type="evidence" value="ECO:0007669"/>
    <property type="project" value="UniProtKB-EC"/>
</dbReference>
<dbReference type="GO" id="GO:0031119">
    <property type="term" value="P:tRNA pseudouridine synthesis"/>
    <property type="evidence" value="ECO:0007669"/>
    <property type="project" value="UniProtKB-UniRule"/>
</dbReference>
<dbReference type="CDD" id="cd02570">
    <property type="entry name" value="PseudoU_synth_EcTruA"/>
    <property type="match status" value="1"/>
</dbReference>
<dbReference type="FunFam" id="3.30.70.580:FF:000001">
    <property type="entry name" value="tRNA pseudouridine synthase A"/>
    <property type="match status" value="1"/>
</dbReference>
<dbReference type="FunFam" id="3.30.70.660:FF:000009">
    <property type="entry name" value="tRNA pseudouridine synthase A"/>
    <property type="match status" value="1"/>
</dbReference>
<dbReference type="Gene3D" id="3.30.70.660">
    <property type="entry name" value="Pseudouridine synthase I, catalytic domain, C-terminal subdomain"/>
    <property type="match status" value="1"/>
</dbReference>
<dbReference type="Gene3D" id="3.30.70.580">
    <property type="entry name" value="Pseudouridine synthase I, catalytic domain, N-terminal subdomain"/>
    <property type="match status" value="1"/>
</dbReference>
<dbReference type="HAMAP" id="MF_00171">
    <property type="entry name" value="TruA"/>
    <property type="match status" value="1"/>
</dbReference>
<dbReference type="InterPro" id="IPR020103">
    <property type="entry name" value="PsdUridine_synth_cat_dom_sf"/>
</dbReference>
<dbReference type="InterPro" id="IPR001406">
    <property type="entry name" value="PsdUridine_synth_TruA"/>
</dbReference>
<dbReference type="InterPro" id="IPR020097">
    <property type="entry name" value="PsdUridine_synth_TruA_a/b_dom"/>
</dbReference>
<dbReference type="InterPro" id="IPR020095">
    <property type="entry name" value="PsdUridine_synth_TruA_C"/>
</dbReference>
<dbReference type="InterPro" id="IPR020094">
    <property type="entry name" value="TruA/RsuA/RluB/E/F_N"/>
</dbReference>
<dbReference type="NCBIfam" id="TIGR00071">
    <property type="entry name" value="hisT_truA"/>
    <property type="match status" value="1"/>
</dbReference>
<dbReference type="PANTHER" id="PTHR11142">
    <property type="entry name" value="PSEUDOURIDYLATE SYNTHASE"/>
    <property type="match status" value="1"/>
</dbReference>
<dbReference type="PANTHER" id="PTHR11142:SF0">
    <property type="entry name" value="TRNA PSEUDOURIDINE SYNTHASE-LIKE 1"/>
    <property type="match status" value="1"/>
</dbReference>
<dbReference type="Pfam" id="PF01416">
    <property type="entry name" value="PseudoU_synth_1"/>
    <property type="match status" value="2"/>
</dbReference>
<dbReference type="PIRSF" id="PIRSF001430">
    <property type="entry name" value="tRNA_psdUrid_synth"/>
    <property type="match status" value="1"/>
</dbReference>
<dbReference type="SUPFAM" id="SSF55120">
    <property type="entry name" value="Pseudouridine synthase"/>
    <property type="match status" value="1"/>
</dbReference>
<organism>
    <name type="scientific">Streptococcus pneumoniae (strain JJA)</name>
    <dbReference type="NCBI Taxonomy" id="488222"/>
    <lineage>
        <taxon>Bacteria</taxon>
        <taxon>Bacillati</taxon>
        <taxon>Bacillota</taxon>
        <taxon>Bacilli</taxon>
        <taxon>Lactobacillales</taxon>
        <taxon>Streptococcaceae</taxon>
        <taxon>Streptococcus</taxon>
    </lineage>
</organism>
<comment type="function">
    <text evidence="1">Formation of pseudouridine at positions 38, 39 and 40 in the anticodon stem and loop of transfer RNAs.</text>
</comment>
<comment type="catalytic activity">
    <reaction evidence="1">
        <text>uridine(38/39/40) in tRNA = pseudouridine(38/39/40) in tRNA</text>
        <dbReference type="Rhea" id="RHEA:22376"/>
        <dbReference type="Rhea" id="RHEA-COMP:10085"/>
        <dbReference type="Rhea" id="RHEA-COMP:10087"/>
        <dbReference type="ChEBI" id="CHEBI:65314"/>
        <dbReference type="ChEBI" id="CHEBI:65315"/>
        <dbReference type="EC" id="5.4.99.12"/>
    </reaction>
</comment>
<comment type="subunit">
    <text evidence="1">Homodimer.</text>
</comment>
<comment type="similarity">
    <text evidence="1">Belongs to the tRNA pseudouridine synthase TruA family.</text>
</comment>
<keyword id="KW-0413">Isomerase</keyword>
<keyword id="KW-0819">tRNA processing</keyword>
<evidence type="ECO:0000255" key="1">
    <source>
        <dbReference type="HAMAP-Rule" id="MF_00171"/>
    </source>
</evidence>
<reference key="1">
    <citation type="journal article" date="2010" name="Genome Biol.">
        <title>Structure and dynamics of the pan-genome of Streptococcus pneumoniae and closely related species.</title>
        <authorList>
            <person name="Donati C."/>
            <person name="Hiller N.L."/>
            <person name="Tettelin H."/>
            <person name="Muzzi A."/>
            <person name="Croucher N.J."/>
            <person name="Angiuoli S.V."/>
            <person name="Oggioni M."/>
            <person name="Dunning Hotopp J.C."/>
            <person name="Hu F.Z."/>
            <person name="Riley D.R."/>
            <person name="Covacci A."/>
            <person name="Mitchell T.J."/>
            <person name="Bentley S.D."/>
            <person name="Kilian M."/>
            <person name="Ehrlich G.D."/>
            <person name="Rappuoli R."/>
            <person name="Moxon E.R."/>
            <person name="Masignani V."/>
        </authorList>
    </citation>
    <scope>NUCLEOTIDE SEQUENCE [LARGE SCALE GENOMIC DNA]</scope>
    <source>
        <strain>JJA</strain>
    </source>
</reference>
<sequence length="249" mass="28412">MTRYKATISYDGYAFAGFQRQSHARSVQEEIEKTLTRLNKGQTITVHGAGRTDSGVHALGQVIHFDLPYQMDEEKLRFALDTQSPEDIDVISIELVADDFHCRYAKHSKTYEFIVDRGRPKNPMRRHYATHFPYPLDVERMQIAIKKLEGTHDFTGFTASGTSVEDKVRTITEASLIVDETGQFLTFTFSGNGFLYKQIRNMVGTLLKIGNNRMPVEQIDLILEKKDRQLAGPTAAPNGLYLKEIRYEE</sequence>
<proteinExistence type="inferred from homology"/>
<protein>
    <recommendedName>
        <fullName evidence="1">tRNA pseudouridine synthase A</fullName>
        <ecNumber evidence="1">5.4.99.12</ecNumber>
    </recommendedName>
    <alternativeName>
        <fullName evidence="1">tRNA pseudouridine(38-40) synthase</fullName>
    </alternativeName>
    <alternativeName>
        <fullName evidence="1">tRNA pseudouridylate synthase I</fullName>
    </alternativeName>
    <alternativeName>
        <fullName evidence="1">tRNA-uridine isomerase I</fullName>
    </alternativeName>
</protein>
<name>TRUA_STRZJ</name>